<gene>
    <name evidence="1" type="primary">rplT</name>
    <name type="ordered locus">HPSH_00630</name>
</gene>
<accession>B2URV4</accession>
<organism>
    <name type="scientific">Helicobacter pylori (strain Shi470)</name>
    <dbReference type="NCBI Taxonomy" id="512562"/>
    <lineage>
        <taxon>Bacteria</taxon>
        <taxon>Pseudomonadati</taxon>
        <taxon>Campylobacterota</taxon>
        <taxon>Epsilonproteobacteria</taxon>
        <taxon>Campylobacterales</taxon>
        <taxon>Helicobacteraceae</taxon>
        <taxon>Helicobacter</taxon>
    </lineage>
</organism>
<keyword id="KW-0687">Ribonucleoprotein</keyword>
<keyword id="KW-0689">Ribosomal protein</keyword>
<keyword id="KW-0694">RNA-binding</keyword>
<keyword id="KW-0699">rRNA-binding</keyword>
<reference key="1">
    <citation type="submission" date="2008-05" db="EMBL/GenBank/DDBJ databases">
        <title>Genome sequence of Helicobacter pylori from the remote Amazon: traces of Asian ancestry of the first Americans.</title>
        <authorList>
            <person name="Kersulyte D."/>
            <person name="Kalia A."/>
            <person name="Gilman R.H."/>
            <person name="Berg D.E."/>
        </authorList>
    </citation>
    <scope>NUCLEOTIDE SEQUENCE [LARGE SCALE GENOMIC DNA]</scope>
    <source>
        <strain>Shi470</strain>
    </source>
</reference>
<dbReference type="EMBL" id="CP001072">
    <property type="protein sequence ID" value="ACD47586.1"/>
    <property type="molecule type" value="Genomic_DNA"/>
</dbReference>
<dbReference type="RefSeq" id="WP_001264172.1">
    <property type="nucleotide sequence ID" value="NC_010698.2"/>
</dbReference>
<dbReference type="SMR" id="B2URV4"/>
<dbReference type="GeneID" id="93236497"/>
<dbReference type="KEGG" id="hps:HPSH_00630"/>
<dbReference type="HOGENOM" id="CLU_123265_0_1_7"/>
<dbReference type="GO" id="GO:1990904">
    <property type="term" value="C:ribonucleoprotein complex"/>
    <property type="evidence" value="ECO:0007669"/>
    <property type="project" value="UniProtKB-KW"/>
</dbReference>
<dbReference type="GO" id="GO:0005840">
    <property type="term" value="C:ribosome"/>
    <property type="evidence" value="ECO:0007669"/>
    <property type="project" value="UniProtKB-KW"/>
</dbReference>
<dbReference type="GO" id="GO:0019843">
    <property type="term" value="F:rRNA binding"/>
    <property type="evidence" value="ECO:0007669"/>
    <property type="project" value="UniProtKB-UniRule"/>
</dbReference>
<dbReference type="GO" id="GO:0003735">
    <property type="term" value="F:structural constituent of ribosome"/>
    <property type="evidence" value="ECO:0007669"/>
    <property type="project" value="InterPro"/>
</dbReference>
<dbReference type="GO" id="GO:0000027">
    <property type="term" value="P:ribosomal large subunit assembly"/>
    <property type="evidence" value="ECO:0007669"/>
    <property type="project" value="UniProtKB-UniRule"/>
</dbReference>
<dbReference type="GO" id="GO:0006412">
    <property type="term" value="P:translation"/>
    <property type="evidence" value="ECO:0007669"/>
    <property type="project" value="InterPro"/>
</dbReference>
<dbReference type="CDD" id="cd07026">
    <property type="entry name" value="Ribosomal_L20"/>
    <property type="match status" value="1"/>
</dbReference>
<dbReference type="FunFam" id="1.10.1900.20:FF:000001">
    <property type="entry name" value="50S ribosomal protein L20"/>
    <property type="match status" value="1"/>
</dbReference>
<dbReference type="Gene3D" id="6.10.160.10">
    <property type="match status" value="1"/>
</dbReference>
<dbReference type="Gene3D" id="1.10.1900.20">
    <property type="entry name" value="Ribosomal protein L20"/>
    <property type="match status" value="1"/>
</dbReference>
<dbReference type="HAMAP" id="MF_00382">
    <property type="entry name" value="Ribosomal_bL20"/>
    <property type="match status" value="1"/>
</dbReference>
<dbReference type="InterPro" id="IPR005813">
    <property type="entry name" value="Ribosomal_bL20"/>
</dbReference>
<dbReference type="InterPro" id="IPR049946">
    <property type="entry name" value="RIBOSOMAL_L20_CS"/>
</dbReference>
<dbReference type="InterPro" id="IPR035566">
    <property type="entry name" value="Ribosomal_protein_bL20_C"/>
</dbReference>
<dbReference type="NCBIfam" id="TIGR01032">
    <property type="entry name" value="rplT_bact"/>
    <property type="match status" value="1"/>
</dbReference>
<dbReference type="PANTHER" id="PTHR10986">
    <property type="entry name" value="39S RIBOSOMAL PROTEIN L20"/>
    <property type="match status" value="1"/>
</dbReference>
<dbReference type="Pfam" id="PF00453">
    <property type="entry name" value="Ribosomal_L20"/>
    <property type="match status" value="1"/>
</dbReference>
<dbReference type="PRINTS" id="PR00062">
    <property type="entry name" value="RIBOSOMALL20"/>
</dbReference>
<dbReference type="SUPFAM" id="SSF74731">
    <property type="entry name" value="Ribosomal protein L20"/>
    <property type="match status" value="1"/>
</dbReference>
<dbReference type="PROSITE" id="PS00937">
    <property type="entry name" value="RIBOSOMAL_L20"/>
    <property type="match status" value="1"/>
</dbReference>
<comment type="function">
    <text evidence="1">Binds directly to 23S ribosomal RNA and is necessary for the in vitro assembly process of the 50S ribosomal subunit. It is not involved in the protein synthesizing functions of that subunit.</text>
</comment>
<comment type="similarity">
    <text evidence="1">Belongs to the bacterial ribosomal protein bL20 family.</text>
</comment>
<feature type="chain" id="PRO_1000122326" description="Large ribosomal subunit protein bL20">
    <location>
        <begin position="1"/>
        <end position="116"/>
    </location>
</feature>
<evidence type="ECO:0000255" key="1">
    <source>
        <dbReference type="HAMAP-Rule" id="MF_00382"/>
    </source>
</evidence>
<evidence type="ECO:0000305" key="2"/>
<proteinExistence type="inferred from homology"/>
<sequence>MRVKTGVVRRRRHKKVLKLARGFYSGRRKHFRKAKEQLERSMYYAFRDRKQKKREFRSLWVVRINAACRMHNTSYSRFMHALKVAGVELDRKVLADMAMNDMQAFESVLESVKEHL</sequence>
<protein>
    <recommendedName>
        <fullName evidence="1">Large ribosomal subunit protein bL20</fullName>
    </recommendedName>
    <alternativeName>
        <fullName evidence="2">50S ribosomal protein L20</fullName>
    </alternativeName>
</protein>
<name>RL20_HELPS</name>